<sequence length="860" mass="97178">MSRFFYGNDSDSDSSGSDEEELYSDEEVEQSEEESSEEDASSEEESSEDEDAGKAGASRFMKDVSDSEESEEEDVVKVVKSAKNKRLEELESTIKLIDNAQKINDWAVISSEFDKMNRQVVKVLQSGPVPKIYVKTVADLEDFVNETVAKQKSSNKKMNASNAKGFNAIKQKIKKNNKEYAAQIEKYRADKDSYMESDEEEEKKPAIAAPRLSKLERVEAPVAVAGDDDGFETVVRGKTLQYTPESILKHLRVIVESRGKKNTDRLEQIKTMEKLLEVAQTPYQRIRVYLTLISTRFDLSTTSTAAYMSVEQWKAAEQELSTLLSVLEKERNYVVSEGAEEWEDDEKQPQVAAGETFYIPGSIVSYVERLDDELTRSLQHIDPHTAEYIERLSDEKQLYTNLVRTQIYVEGLTKLEKTELRQDSLNRVVMRRLEHIYFKPSQVITILEEGTDKALPSELETSITTRGNSDAQTLVQTLCNYLFRNSDGILRARAMLAQIYFLALHDQYYRARDLMLMSHLSENIANFDVSSQILFNRTLVQIGLCAFRAGLIYEAQNTLSEICGSGRQKELLAQGIILQRYSTVSPEQERLERQRQLPFHMHINLELLECIYLTSSMFLEVPLMAQTSSSPEMKRRVISKTFRRMLDYNERQVFTGPAENTRDGVIMSAKFLAAGDWKKAAEMLNSIKIWDLMPQPEKIKEMLSQQIQEEGLRTYLFTYAPFYDSLSISTLSTMFELSEKKIAAIISRMISHEELGAALDQVNDAIVFRKGVELSRLQSQIVTLADKSMNLLEANEKTLEQRTQGMANAFQRDQGAGARGGRGPRGGGQARGGPRLPGGQQRRPGGQQFGGGALGGAIKA</sequence>
<proteinExistence type="inferred from homology"/>
<name>EIF3C_EMENI</name>
<reference key="1">
    <citation type="journal article" date="2005" name="Nature">
        <title>Sequencing of Aspergillus nidulans and comparative analysis with A. fumigatus and A. oryzae.</title>
        <authorList>
            <person name="Galagan J.E."/>
            <person name="Calvo S.E."/>
            <person name="Cuomo C."/>
            <person name="Ma L.-J."/>
            <person name="Wortman J.R."/>
            <person name="Batzoglou S."/>
            <person name="Lee S.-I."/>
            <person name="Bastuerkmen M."/>
            <person name="Spevak C.C."/>
            <person name="Clutterbuck J."/>
            <person name="Kapitonov V."/>
            <person name="Jurka J."/>
            <person name="Scazzocchio C."/>
            <person name="Farman M.L."/>
            <person name="Butler J."/>
            <person name="Purcell S."/>
            <person name="Harris S."/>
            <person name="Braus G.H."/>
            <person name="Draht O."/>
            <person name="Busch S."/>
            <person name="D'Enfert C."/>
            <person name="Bouchier C."/>
            <person name="Goldman G.H."/>
            <person name="Bell-Pedersen D."/>
            <person name="Griffiths-Jones S."/>
            <person name="Doonan J.H."/>
            <person name="Yu J."/>
            <person name="Vienken K."/>
            <person name="Pain A."/>
            <person name="Freitag M."/>
            <person name="Selker E.U."/>
            <person name="Archer D.B."/>
            <person name="Penalva M.A."/>
            <person name="Oakley B.R."/>
            <person name="Momany M."/>
            <person name="Tanaka T."/>
            <person name="Kumagai T."/>
            <person name="Asai K."/>
            <person name="Machida M."/>
            <person name="Nierman W.C."/>
            <person name="Denning D.W."/>
            <person name="Caddick M.X."/>
            <person name="Hynes M."/>
            <person name="Paoletti M."/>
            <person name="Fischer R."/>
            <person name="Miller B.L."/>
            <person name="Dyer P.S."/>
            <person name="Sachs M.S."/>
            <person name="Osmani S.A."/>
            <person name="Birren B.W."/>
        </authorList>
    </citation>
    <scope>NUCLEOTIDE SEQUENCE [LARGE SCALE GENOMIC DNA]</scope>
    <source>
        <strain>FGSC A4 / ATCC 38163 / CBS 112.46 / NRRL 194 / M139</strain>
    </source>
</reference>
<reference key="2">
    <citation type="journal article" date="2009" name="Fungal Genet. Biol.">
        <title>The 2008 update of the Aspergillus nidulans genome annotation: a community effort.</title>
        <authorList>
            <person name="Wortman J.R."/>
            <person name="Gilsenan J.M."/>
            <person name="Joardar V."/>
            <person name="Deegan J."/>
            <person name="Clutterbuck J."/>
            <person name="Andersen M.R."/>
            <person name="Archer D."/>
            <person name="Bencina M."/>
            <person name="Braus G."/>
            <person name="Coutinho P."/>
            <person name="von Dohren H."/>
            <person name="Doonan J."/>
            <person name="Driessen A.J."/>
            <person name="Durek P."/>
            <person name="Espeso E."/>
            <person name="Fekete E."/>
            <person name="Flipphi M."/>
            <person name="Estrada C.G."/>
            <person name="Geysens S."/>
            <person name="Goldman G."/>
            <person name="de Groot P.W."/>
            <person name="Hansen K."/>
            <person name="Harris S.D."/>
            <person name="Heinekamp T."/>
            <person name="Helmstaedt K."/>
            <person name="Henrissat B."/>
            <person name="Hofmann G."/>
            <person name="Homan T."/>
            <person name="Horio T."/>
            <person name="Horiuchi H."/>
            <person name="James S."/>
            <person name="Jones M."/>
            <person name="Karaffa L."/>
            <person name="Karanyi Z."/>
            <person name="Kato M."/>
            <person name="Keller N."/>
            <person name="Kelly D.E."/>
            <person name="Kiel J.A."/>
            <person name="Kim J.M."/>
            <person name="van der Klei I.J."/>
            <person name="Klis F.M."/>
            <person name="Kovalchuk A."/>
            <person name="Krasevec N."/>
            <person name="Kubicek C.P."/>
            <person name="Liu B."/>
            <person name="Maccabe A."/>
            <person name="Meyer V."/>
            <person name="Mirabito P."/>
            <person name="Miskei M."/>
            <person name="Mos M."/>
            <person name="Mullins J."/>
            <person name="Nelson D.R."/>
            <person name="Nielsen J."/>
            <person name="Oakley B.R."/>
            <person name="Osmani S.A."/>
            <person name="Pakula T."/>
            <person name="Paszewski A."/>
            <person name="Paulsen I."/>
            <person name="Pilsyk S."/>
            <person name="Pocsi I."/>
            <person name="Punt P.J."/>
            <person name="Ram A.F."/>
            <person name="Ren Q."/>
            <person name="Robellet X."/>
            <person name="Robson G."/>
            <person name="Seiboth B."/>
            <person name="van Solingen P."/>
            <person name="Specht T."/>
            <person name="Sun J."/>
            <person name="Taheri-Talesh N."/>
            <person name="Takeshita N."/>
            <person name="Ussery D."/>
            <person name="vanKuyk P.A."/>
            <person name="Visser H."/>
            <person name="van de Vondervoort P.J."/>
            <person name="de Vries R.P."/>
            <person name="Walton J."/>
            <person name="Xiang X."/>
            <person name="Xiong Y."/>
            <person name="Zeng A.P."/>
            <person name="Brandt B.W."/>
            <person name="Cornell M.J."/>
            <person name="van den Hondel C.A."/>
            <person name="Visser J."/>
            <person name="Oliver S.G."/>
            <person name="Turner G."/>
        </authorList>
    </citation>
    <scope>GENOME REANNOTATION</scope>
    <source>
        <strain>FGSC A4 / ATCC 38163 / CBS 112.46 / NRRL 194 / M139</strain>
    </source>
</reference>
<comment type="function">
    <text evidence="1">Component of the eukaryotic translation initiation factor 3 (eIF-3) complex, which is involved in protein synthesis of a specialized repertoire of mRNAs and, together with other initiation factors, stimulates binding of mRNA and methionyl-tRNAi to the 40S ribosome. The eIF-3 complex specifically targets and initiates translation of a subset of mRNAs involved in cell proliferation.</text>
</comment>
<comment type="subunit">
    <text evidence="1">Component of the eukaryotic translation initiation factor 3 (eIF-3) complex.</text>
</comment>
<comment type="subcellular location">
    <subcellularLocation>
        <location evidence="1">Cytoplasm</location>
    </subcellularLocation>
</comment>
<comment type="similarity">
    <text evidence="1">Belongs to the eIF-3 subunit C family.</text>
</comment>
<organism>
    <name type="scientific">Emericella nidulans (strain FGSC A4 / ATCC 38163 / CBS 112.46 / NRRL 194 / M139)</name>
    <name type="common">Aspergillus nidulans</name>
    <dbReference type="NCBI Taxonomy" id="227321"/>
    <lineage>
        <taxon>Eukaryota</taxon>
        <taxon>Fungi</taxon>
        <taxon>Dikarya</taxon>
        <taxon>Ascomycota</taxon>
        <taxon>Pezizomycotina</taxon>
        <taxon>Eurotiomycetes</taxon>
        <taxon>Eurotiomycetidae</taxon>
        <taxon>Eurotiales</taxon>
        <taxon>Aspergillaceae</taxon>
        <taxon>Aspergillus</taxon>
        <taxon>Aspergillus subgen. Nidulantes</taxon>
    </lineage>
</organism>
<protein>
    <recommendedName>
        <fullName evidence="1">Eukaryotic translation initiation factor 3 subunit C</fullName>
        <shortName evidence="1">eIF3c</shortName>
    </recommendedName>
    <alternativeName>
        <fullName evidence="1">Eukaryotic translation initiation factor 3 93 kDa subunit homolog</fullName>
        <shortName evidence="1">eIF3 p93</shortName>
    </alternativeName>
    <alternativeName>
        <fullName evidence="1">Translation initiation factor eIF3, p93 subunit homolog</fullName>
    </alternativeName>
</protein>
<accession>Q5AX75</accession>
<accession>C8VDC8</accession>
<evidence type="ECO:0000255" key="1">
    <source>
        <dbReference type="HAMAP-Rule" id="MF_03002"/>
    </source>
</evidence>
<evidence type="ECO:0000255" key="2">
    <source>
        <dbReference type="PROSITE-ProRule" id="PRU01185"/>
    </source>
</evidence>
<evidence type="ECO:0000256" key="3">
    <source>
        <dbReference type="SAM" id="MobiDB-lite"/>
    </source>
</evidence>
<gene>
    <name type="primary">nip1</name>
    <name type="ORF">AN7105</name>
</gene>
<feature type="chain" id="PRO_0000364283" description="Eukaryotic translation initiation factor 3 subunit C">
    <location>
        <begin position="1"/>
        <end position="860"/>
    </location>
</feature>
<feature type="domain" description="PCI" evidence="2">
    <location>
        <begin position="599"/>
        <end position="773"/>
    </location>
</feature>
<feature type="region of interest" description="Disordered" evidence="3">
    <location>
        <begin position="1"/>
        <end position="76"/>
    </location>
</feature>
<feature type="region of interest" description="Disordered" evidence="3">
    <location>
        <begin position="812"/>
        <end position="860"/>
    </location>
</feature>
<feature type="compositionally biased region" description="Acidic residues" evidence="3">
    <location>
        <begin position="10"/>
        <end position="51"/>
    </location>
</feature>
<feature type="compositionally biased region" description="Gly residues" evidence="3">
    <location>
        <begin position="817"/>
        <end position="831"/>
    </location>
</feature>
<feature type="compositionally biased region" description="Low complexity" evidence="3">
    <location>
        <begin position="832"/>
        <end position="846"/>
    </location>
</feature>
<feature type="compositionally biased region" description="Gly residues" evidence="3">
    <location>
        <begin position="847"/>
        <end position="860"/>
    </location>
</feature>
<keyword id="KW-0963">Cytoplasm</keyword>
<keyword id="KW-0396">Initiation factor</keyword>
<keyword id="KW-0648">Protein biosynthesis</keyword>
<keyword id="KW-1185">Reference proteome</keyword>
<dbReference type="EMBL" id="AACD01000119">
    <property type="protein sequence ID" value="EAA61310.1"/>
    <property type="molecule type" value="Genomic_DNA"/>
</dbReference>
<dbReference type="EMBL" id="BN001304">
    <property type="protein sequence ID" value="CBF79072.1"/>
    <property type="molecule type" value="Genomic_DNA"/>
</dbReference>
<dbReference type="RefSeq" id="XP_664709.1">
    <property type="nucleotide sequence ID" value="XM_659617.1"/>
</dbReference>
<dbReference type="SMR" id="Q5AX75"/>
<dbReference type="FunCoup" id="Q5AX75">
    <property type="interactions" value="1154"/>
</dbReference>
<dbReference type="STRING" id="227321.Q5AX75"/>
<dbReference type="EnsemblFungi" id="CBF79072">
    <property type="protein sequence ID" value="CBF79072"/>
    <property type="gene ID" value="ANIA_07105"/>
</dbReference>
<dbReference type="KEGG" id="ani:ANIA_07105"/>
<dbReference type="VEuPathDB" id="FungiDB:AN7105"/>
<dbReference type="eggNOG" id="KOG1076">
    <property type="taxonomic scope" value="Eukaryota"/>
</dbReference>
<dbReference type="HOGENOM" id="CLU_004304_0_2_1"/>
<dbReference type="InParanoid" id="Q5AX75"/>
<dbReference type="OMA" id="FRCGLIK"/>
<dbReference type="OrthoDB" id="29647at2759"/>
<dbReference type="Proteomes" id="UP000000560">
    <property type="component" value="Chromosome IV"/>
</dbReference>
<dbReference type="GO" id="GO:0010494">
    <property type="term" value="C:cytoplasmic stress granule"/>
    <property type="evidence" value="ECO:0007669"/>
    <property type="project" value="EnsemblFungi"/>
</dbReference>
<dbReference type="GO" id="GO:0016282">
    <property type="term" value="C:eukaryotic 43S preinitiation complex"/>
    <property type="evidence" value="ECO:0007669"/>
    <property type="project" value="UniProtKB-UniRule"/>
</dbReference>
<dbReference type="GO" id="GO:0033290">
    <property type="term" value="C:eukaryotic 48S preinitiation complex"/>
    <property type="evidence" value="ECO:0007669"/>
    <property type="project" value="UniProtKB-UniRule"/>
</dbReference>
<dbReference type="GO" id="GO:0005852">
    <property type="term" value="C:eukaryotic translation initiation factor 3 complex"/>
    <property type="evidence" value="ECO:0000318"/>
    <property type="project" value="GO_Central"/>
</dbReference>
<dbReference type="GO" id="GO:0071540">
    <property type="term" value="C:eukaryotic translation initiation factor 3 complex, eIF3e"/>
    <property type="evidence" value="ECO:0007669"/>
    <property type="project" value="EnsemblFungi"/>
</dbReference>
<dbReference type="GO" id="GO:0071541">
    <property type="term" value="C:eukaryotic translation initiation factor 3 complex, eIF3m"/>
    <property type="evidence" value="ECO:0007669"/>
    <property type="project" value="EnsemblFungi"/>
</dbReference>
<dbReference type="GO" id="GO:0043614">
    <property type="term" value="C:multi-eIF complex"/>
    <property type="evidence" value="ECO:0007669"/>
    <property type="project" value="EnsemblFungi"/>
</dbReference>
<dbReference type="GO" id="GO:0003723">
    <property type="term" value="F:RNA binding"/>
    <property type="evidence" value="ECO:0007669"/>
    <property type="project" value="InterPro"/>
</dbReference>
<dbReference type="GO" id="GO:0003743">
    <property type="term" value="F:translation initiation factor activity"/>
    <property type="evidence" value="ECO:0007669"/>
    <property type="project" value="UniProtKB-UniRule"/>
</dbReference>
<dbReference type="GO" id="GO:0031369">
    <property type="term" value="F:translation initiation factor binding"/>
    <property type="evidence" value="ECO:0000318"/>
    <property type="project" value="GO_Central"/>
</dbReference>
<dbReference type="GO" id="GO:0001732">
    <property type="term" value="P:formation of cytoplasmic translation initiation complex"/>
    <property type="evidence" value="ECO:0007669"/>
    <property type="project" value="UniProtKB-UniRule"/>
</dbReference>
<dbReference type="GO" id="GO:0006413">
    <property type="term" value="P:translational initiation"/>
    <property type="evidence" value="ECO:0000318"/>
    <property type="project" value="GO_Central"/>
</dbReference>
<dbReference type="FunFam" id="1.10.10.10:FF:000300">
    <property type="entry name" value="Eukaryotic translation initiation factor 3 subunit C"/>
    <property type="match status" value="1"/>
</dbReference>
<dbReference type="Gene3D" id="1.10.10.10">
    <property type="entry name" value="Winged helix-like DNA-binding domain superfamily/Winged helix DNA-binding domain"/>
    <property type="match status" value="1"/>
</dbReference>
<dbReference type="HAMAP" id="MF_03002">
    <property type="entry name" value="eIF3c"/>
    <property type="match status" value="1"/>
</dbReference>
<dbReference type="InterPro" id="IPR027516">
    <property type="entry name" value="EIF3C"/>
</dbReference>
<dbReference type="InterPro" id="IPR008905">
    <property type="entry name" value="EIF3C_N_dom"/>
</dbReference>
<dbReference type="InterPro" id="IPR000717">
    <property type="entry name" value="PCI_dom"/>
</dbReference>
<dbReference type="InterPro" id="IPR036388">
    <property type="entry name" value="WH-like_DNA-bd_sf"/>
</dbReference>
<dbReference type="InterPro" id="IPR036390">
    <property type="entry name" value="WH_DNA-bd_sf"/>
</dbReference>
<dbReference type="PANTHER" id="PTHR13937">
    <property type="entry name" value="EUKARYOTIC TRANSLATION INITATION FACTOR 3, SUBUNIT 8 EIF3S8 -RELATED"/>
    <property type="match status" value="1"/>
</dbReference>
<dbReference type="PANTHER" id="PTHR13937:SF0">
    <property type="entry name" value="EUKARYOTIC TRANSLATION INITIATION FACTOR 3 SUBUNIT C-RELATED"/>
    <property type="match status" value="1"/>
</dbReference>
<dbReference type="Pfam" id="PF05470">
    <property type="entry name" value="eIF-3c_N"/>
    <property type="match status" value="1"/>
</dbReference>
<dbReference type="Pfam" id="PF01399">
    <property type="entry name" value="PCI"/>
    <property type="match status" value="1"/>
</dbReference>
<dbReference type="SMART" id="SM00088">
    <property type="entry name" value="PINT"/>
    <property type="match status" value="1"/>
</dbReference>
<dbReference type="SUPFAM" id="SSF46785">
    <property type="entry name" value="Winged helix' DNA-binding domain"/>
    <property type="match status" value="1"/>
</dbReference>
<dbReference type="PROSITE" id="PS50250">
    <property type="entry name" value="PCI"/>
    <property type="match status" value="1"/>
</dbReference>